<reference key="1">
    <citation type="journal article" date="2007" name="J. Bacteriol.">
        <title>Whole-genome analysis of the methyl tert-butyl ether-degrading beta-proteobacterium Methylibium petroleiphilum PM1.</title>
        <authorList>
            <person name="Kane S.R."/>
            <person name="Chakicherla A.Y."/>
            <person name="Chain P.S.G."/>
            <person name="Schmidt R."/>
            <person name="Shin M.W."/>
            <person name="Legler T.C."/>
            <person name="Scow K.M."/>
            <person name="Larimer F.W."/>
            <person name="Lucas S.M."/>
            <person name="Richardson P.M."/>
            <person name="Hristova K.R."/>
        </authorList>
    </citation>
    <scope>NUCLEOTIDE SEQUENCE [LARGE SCALE GENOMIC DNA]</scope>
    <source>
        <strain>ATCC BAA-1232 / LMG 22953 / PM1</strain>
    </source>
</reference>
<protein>
    <recommendedName>
        <fullName evidence="1">DNA-directed RNA polymerase subunit omega</fullName>
        <shortName evidence="1">RNAP omega subunit</shortName>
        <ecNumber evidence="1">2.7.7.6</ecNumber>
    </recommendedName>
    <alternativeName>
        <fullName evidence="1">RNA polymerase omega subunit</fullName>
    </alternativeName>
    <alternativeName>
        <fullName evidence="1">Transcriptase subunit omega</fullName>
    </alternativeName>
</protein>
<gene>
    <name evidence="1" type="primary">rpoZ</name>
    <name type="ordered locus">Mpe_A2716</name>
</gene>
<proteinExistence type="inferred from homology"/>
<accession>A2SJD1</accession>
<keyword id="KW-0240">DNA-directed RNA polymerase</keyword>
<keyword id="KW-0548">Nucleotidyltransferase</keyword>
<keyword id="KW-1185">Reference proteome</keyword>
<keyword id="KW-0804">Transcription</keyword>
<keyword id="KW-0808">Transferase</keyword>
<sequence length="67" mass="7441">MARITVEDCLTKIPNRFQLVLAATYRARMLSQGHAPKVESKNKPGVTALREIAEGHVGLEMLRKVPV</sequence>
<organism>
    <name type="scientific">Methylibium petroleiphilum (strain ATCC BAA-1232 / LMG 22953 / PM1)</name>
    <dbReference type="NCBI Taxonomy" id="420662"/>
    <lineage>
        <taxon>Bacteria</taxon>
        <taxon>Pseudomonadati</taxon>
        <taxon>Pseudomonadota</taxon>
        <taxon>Betaproteobacteria</taxon>
        <taxon>Burkholderiales</taxon>
        <taxon>Sphaerotilaceae</taxon>
        <taxon>Methylibium</taxon>
    </lineage>
</organism>
<feature type="chain" id="PRO_1000005957" description="DNA-directed RNA polymerase subunit omega">
    <location>
        <begin position="1"/>
        <end position="67"/>
    </location>
</feature>
<evidence type="ECO:0000255" key="1">
    <source>
        <dbReference type="HAMAP-Rule" id="MF_00366"/>
    </source>
</evidence>
<name>RPOZ_METPP</name>
<comment type="function">
    <text evidence="1">Promotes RNA polymerase assembly. Latches the N- and C-terminal regions of the beta' subunit thereby facilitating its interaction with the beta and alpha subunits.</text>
</comment>
<comment type="catalytic activity">
    <reaction evidence="1">
        <text>RNA(n) + a ribonucleoside 5'-triphosphate = RNA(n+1) + diphosphate</text>
        <dbReference type="Rhea" id="RHEA:21248"/>
        <dbReference type="Rhea" id="RHEA-COMP:14527"/>
        <dbReference type="Rhea" id="RHEA-COMP:17342"/>
        <dbReference type="ChEBI" id="CHEBI:33019"/>
        <dbReference type="ChEBI" id="CHEBI:61557"/>
        <dbReference type="ChEBI" id="CHEBI:140395"/>
        <dbReference type="EC" id="2.7.7.6"/>
    </reaction>
</comment>
<comment type="subunit">
    <text evidence="1">The RNAP catalytic core consists of 2 alpha, 1 beta, 1 beta' and 1 omega subunit. When a sigma factor is associated with the core the holoenzyme is formed, which can initiate transcription.</text>
</comment>
<comment type="similarity">
    <text evidence="1">Belongs to the RNA polymerase subunit omega family.</text>
</comment>
<dbReference type="EC" id="2.7.7.6" evidence="1"/>
<dbReference type="EMBL" id="CP000555">
    <property type="protein sequence ID" value="ABM95670.1"/>
    <property type="molecule type" value="Genomic_DNA"/>
</dbReference>
<dbReference type="RefSeq" id="WP_011830300.1">
    <property type="nucleotide sequence ID" value="NC_008825.1"/>
</dbReference>
<dbReference type="SMR" id="A2SJD1"/>
<dbReference type="STRING" id="420662.Mpe_A2716"/>
<dbReference type="KEGG" id="mpt:Mpe_A2716"/>
<dbReference type="eggNOG" id="COG1758">
    <property type="taxonomic scope" value="Bacteria"/>
</dbReference>
<dbReference type="HOGENOM" id="CLU_125406_5_2_4"/>
<dbReference type="Proteomes" id="UP000000366">
    <property type="component" value="Chromosome"/>
</dbReference>
<dbReference type="GO" id="GO:0000428">
    <property type="term" value="C:DNA-directed RNA polymerase complex"/>
    <property type="evidence" value="ECO:0007669"/>
    <property type="project" value="UniProtKB-KW"/>
</dbReference>
<dbReference type="GO" id="GO:0003677">
    <property type="term" value="F:DNA binding"/>
    <property type="evidence" value="ECO:0007669"/>
    <property type="project" value="UniProtKB-UniRule"/>
</dbReference>
<dbReference type="GO" id="GO:0003899">
    <property type="term" value="F:DNA-directed RNA polymerase activity"/>
    <property type="evidence" value="ECO:0007669"/>
    <property type="project" value="UniProtKB-UniRule"/>
</dbReference>
<dbReference type="GO" id="GO:0006351">
    <property type="term" value="P:DNA-templated transcription"/>
    <property type="evidence" value="ECO:0007669"/>
    <property type="project" value="UniProtKB-UniRule"/>
</dbReference>
<dbReference type="Gene3D" id="3.90.940.10">
    <property type="match status" value="1"/>
</dbReference>
<dbReference type="HAMAP" id="MF_00366">
    <property type="entry name" value="RNApol_bact_RpoZ"/>
    <property type="match status" value="1"/>
</dbReference>
<dbReference type="InterPro" id="IPR003716">
    <property type="entry name" value="DNA-dir_RNA_pol_omega"/>
</dbReference>
<dbReference type="InterPro" id="IPR006110">
    <property type="entry name" value="Pol_omega/Rpo6/RPB6"/>
</dbReference>
<dbReference type="InterPro" id="IPR036161">
    <property type="entry name" value="RPB6/omega-like_sf"/>
</dbReference>
<dbReference type="NCBIfam" id="TIGR00690">
    <property type="entry name" value="rpoZ"/>
    <property type="match status" value="1"/>
</dbReference>
<dbReference type="PANTHER" id="PTHR34476">
    <property type="entry name" value="DNA-DIRECTED RNA POLYMERASE SUBUNIT OMEGA"/>
    <property type="match status" value="1"/>
</dbReference>
<dbReference type="PANTHER" id="PTHR34476:SF1">
    <property type="entry name" value="DNA-DIRECTED RNA POLYMERASE SUBUNIT OMEGA"/>
    <property type="match status" value="1"/>
</dbReference>
<dbReference type="Pfam" id="PF01192">
    <property type="entry name" value="RNA_pol_Rpb6"/>
    <property type="match status" value="1"/>
</dbReference>
<dbReference type="SMART" id="SM01409">
    <property type="entry name" value="RNA_pol_Rpb6"/>
    <property type="match status" value="1"/>
</dbReference>
<dbReference type="SUPFAM" id="SSF63562">
    <property type="entry name" value="RPB6/omega subunit-like"/>
    <property type="match status" value="1"/>
</dbReference>